<comment type="function">
    <text evidence="2">With S4 and S5 plays an important role in translational accuracy.</text>
</comment>
<comment type="function">
    <text evidence="2">Interacts with and stabilizes bases of the 16S rRNA that are involved in tRNA selection in the A site and with the mRNA backbone. Located at the interface of the 30S and 50S subunits, it traverses the body of the 30S subunit contacting proteins on the other side and probably holding the rRNA structure together. The combined cluster of proteins S8, S12 and S17 appears to hold together the shoulder and platform of the 30S subunit.</text>
</comment>
<comment type="subunit">
    <text evidence="2">Part of the 30S ribosomal subunit. Contacts proteins S8 and S17. May interact with IF1 in the 30S initiation complex.</text>
</comment>
<comment type="similarity">
    <text evidence="2">Belongs to the universal ribosomal protein uS12 family.</text>
</comment>
<accession>A6LEJ5</accession>
<proteinExistence type="inferred from homology"/>
<reference key="1">
    <citation type="journal article" date="2007" name="PLoS Biol.">
        <title>Evolution of symbiotic bacteria in the distal human intestine.</title>
        <authorList>
            <person name="Xu J."/>
            <person name="Mahowald M.A."/>
            <person name="Ley R.E."/>
            <person name="Lozupone C.A."/>
            <person name="Hamady M."/>
            <person name="Martens E.C."/>
            <person name="Henrissat B."/>
            <person name="Coutinho P.M."/>
            <person name="Minx P."/>
            <person name="Latreille P."/>
            <person name="Cordum H."/>
            <person name="Van Brunt A."/>
            <person name="Kim K."/>
            <person name="Fulton R.S."/>
            <person name="Fulton L.A."/>
            <person name="Clifton S.W."/>
            <person name="Wilson R.K."/>
            <person name="Knight R.D."/>
            <person name="Gordon J.I."/>
        </authorList>
    </citation>
    <scope>NUCLEOTIDE SEQUENCE [LARGE SCALE GENOMIC DNA]</scope>
    <source>
        <strain>ATCC 8503 / DSM 20701 / CIP 104284 / JCM 5825 / NCTC 11152</strain>
    </source>
</reference>
<gene>
    <name evidence="2" type="primary">rpsL</name>
    <name type="ordered locus">BDI_2384</name>
</gene>
<protein>
    <recommendedName>
        <fullName evidence="2">Small ribosomal subunit protein uS12</fullName>
    </recommendedName>
    <alternativeName>
        <fullName evidence="4">30S ribosomal protein S12</fullName>
    </alternativeName>
</protein>
<feature type="chain" id="PRO_1000049800" description="Small ribosomal subunit protein uS12">
    <location>
        <begin position="1"/>
        <end position="136"/>
    </location>
</feature>
<feature type="region of interest" description="Disordered" evidence="3">
    <location>
        <begin position="104"/>
        <end position="136"/>
    </location>
</feature>
<feature type="compositionally biased region" description="Basic residues" evidence="3">
    <location>
        <begin position="111"/>
        <end position="123"/>
    </location>
</feature>
<feature type="compositionally biased region" description="Low complexity" evidence="3">
    <location>
        <begin position="124"/>
        <end position="136"/>
    </location>
</feature>
<feature type="modified residue" description="3-methylthioaspartic acid" evidence="1">
    <location>
        <position position="89"/>
    </location>
</feature>
<dbReference type="EMBL" id="CP000140">
    <property type="protein sequence ID" value="ABR44109.1"/>
    <property type="molecule type" value="Genomic_DNA"/>
</dbReference>
<dbReference type="RefSeq" id="WP_005853956.1">
    <property type="nucleotide sequence ID" value="NZ_LR215978.1"/>
</dbReference>
<dbReference type="SMR" id="A6LEJ5"/>
<dbReference type="STRING" id="435591.BDI_2384"/>
<dbReference type="PaxDb" id="435591-BDI_2384"/>
<dbReference type="GeneID" id="93522377"/>
<dbReference type="KEGG" id="pdi:BDI_2384"/>
<dbReference type="eggNOG" id="COG0048">
    <property type="taxonomic scope" value="Bacteria"/>
</dbReference>
<dbReference type="HOGENOM" id="CLU_104295_1_2_10"/>
<dbReference type="BioCyc" id="PDIS435591:G1G5A-2449-MONOMER"/>
<dbReference type="Proteomes" id="UP000000566">
    <property type="component" value="Chromosome"/>
</dbReference>
<dbReference type="GO" id="GO:0015935">
    <property type="term" value="C:small ribosomal subunit"/>
    <property type="evidence" value="ECO:0007669"/>
    <property type="project" value="InterPro"/>
</dbReference>
<dbReference type="GO" id="GO:0019843">
    <property type="term" value="F:rRNA binding"/>
    <property type="evidence" value="ECO:0007669"/>
    <property type="project" value="UniProtKB-UniRule"/>
</dbReference>
<dbReference type="GO" id="GO:0003735">
    <property type="term" value="F:structural constituent of ribosome"/>
    <property type="evidence" value="ECO:0007669"/>
    <property type="project" value="InterPro"/>
</dbReference>
<dbReference type="GO" id="GO:0000049">
    <property type="term" value="F:tRNA binding"/>
    <property type="evidence" value="ECO:0007669"/>
    <property type="project" value="UniProtKB-UniRule"/>
</dbReference>
<dbReference type="GO" id="GO:0006412">
    <property type="term" value="P:translation"/>
    <property type="evidence" value="ECO:0007669"/>
    <property type="project" value="UniProtKB-UniRule"/>
</dbReference>
<dbReference type="CDD" id="cd03368">
    <property type="entry name" value="Ribosomal_S12"/>
    <property type="match status" value="1"/>
</dbReference>
<dbReference type="FunFam" id="2.40.50.140:FF:000001">
    <property type="entry name" value="30S ribosomal protein S12"/>
    <property type="match status" value="1"/>
</dbReference>
<dbReference type="Gene3D" id="2.40.50.140">
    <property type="entry name" value="Nucleic acid-binding proteins"/>
    <property type="match status" value="1"/>
</dbReference>
<dbReference type="HAMAP" id="MF_00403_B">
    <property type="entry name" value="Ribosomal_uS12_B"/>
    <property type="match status" value="1"/>
</dbReference>
<dbReference type="InterPro" id="IPR012340">
    <property type="entry name" value="NA-bd_OB-fold"/>
</dbReference>
<dbReference type="InterPro" id="IPR006032">
    <property type="entry name" value="Ribosomal_uS12"/>
</dbReference>
<dbReference type="InterPro" id="IPR005679">
    <property type="entry name" value="Ribosomal_uS12_bac"/>
</dbReference>
<dbReference type="NCBIfam" id="TIGR00981">
    <property type="entry name" value="rpsL_bact"/>
    <property type="match status" value="1"/>
</dbReference>
<dbReference type="PANTHER" id="PTHR11652">
    <property type="entry name" value="30S RIBOSOMAL PROTEIN S12 FAMILY MEMBER"/>
    <property type="match status" value="1"/>
</dbReference>
<dbReference type="Pfam" id="PF00164">
    <property type="entry name" value="Ribosom_S12_S23"/>
    <property type="match status" value="1"/>
</dbReference>
<dbReference type="PIRSF" id="PIRSF002133">
    <property type="entry name" value="Ribosomal_S12/S23"/>
    <property type="match status" value="1"/>
</dbReference>
<dbReference type="PRINTS" id="PR01034">
    <property type="entry name" value="RIBOSOMALS12"/>
</dbReference>
<dbReference type="SUPFAM" id="SSF50249">
    <property type="entry name" value="Nucleic acid-binding proteins"/>
    <property type="match status" value="1"/>
</dbReference>
<dbReference type="PROSITE" id="PS00055">
    <property type="entry name" value="RIBOSOMAL_S12"/>
    <property type="match status" value="1"/>
</dbReference>
<organism>
    <name type="scientific">Parabacteroides distasonis (strain ATCC 8503 / DSM 20701 / CIP 104284 / JCM 5825 / NCTC 11152)</name>
    <dbReference type="NCBI Taxonomy" id="435591"/>
    <lineage>
        <taxon>Bacteria</taxon>
        <taxon>Pseudomonadati</taxon>
        <taxon>Bacteroidota</taxon>
        <taxon>Bacteroidia</taxon>
        <taxon>Bacteroidales</taxon>
        <taxon>Tannerellaceae</taxon>
        <taxon>Parabacteroides</taxon>
    </lineage>
</organism>
<sequence>MPTIQQLVRKGRETLVEKGKSPALDACPQRRGVCVRVYTTTPKKPNSAMRKVARVRLTNGKEVNSYIPGEGHNLQEHSIVLVRGGRVKDLPGVRYHIVRGTLDTAGVNGRTQRRSKYGAKRPKPGQAAAAAKGKKK</sequence>
<evidence type="ECO:0000250" key="1"/>
<evidence type="ECO:0000255" key="2">
    <source>
        <dbReference type="HAMAP-Rule" id="MF_00403"/>
    </source>
</evidence>
<evidence type="ECO:0000256" key="3">
    <source>
        <dbReference type="SAM" id="MobiDB-lite"/>
    </source>
</evidence>
<evidence type="ECO:0000305" key="4"/>
<keyword id="KW-0488">Methylation</keyword>
<keyword id="KW-1185">Reference proteome</keyword>
<keyword id="KW-0687">Ribonucleoprotein</keyword>
<keyword id="KW-0689">Ribosomal protein</keyword>
<keyword id="KW-0694">RNA-binding</keyword>
<keyword id="KW-0699">rRNA-binding</keyword>
<keyword id="KW-0820">tRNA-binding</keyword>
<name>RS12_PARD8</name>